<feature type="chain" id="PRO_0000235139" description="4-diphosphocytidyl-2-C-methyl-D-erythritol kinase">
    <location>
        <begin position="1"/>
        <end position="282"/>
    </location>
</feature>
<feature type="active site" evidence="1">
    <location>
        <position position="8"/>
    </location>
</feature>
<feature type="active site" evidence="1">
    <location>
        <position position="133"/>
    </location>
</feature>
<feature type="binding site" evidence="1">
    <location>
        <begin position="91"/>
        <end position="101"/>
    </location>
    <ligand>
        <name>ATP</name>
        <dbReference type="ChEBI" id="CHEBI:30616"/>
    </ligand>
</feature>
<protein>
    <recommendedName>
        <fullName evidence="1">4-diphosphocytidyl-2-C-methyl-D-erythritol kinase</fullName>
        <shortName evidence="1">CMK</shortName>
        <ecNumber evidence="1">2.7.1.148</ecNumber>
    </recommendedName>
    <alternativeName>
        <fullName evidence="1">4-(cytidine-5'-diphospho)-2-C-methyl-D-erythritol kinase</fullName>
    </alternativeName>
</protein>
<sequence length="282" mass="30064">MEIECHAKVNLTLDVLGRRPDGYHEIRSVMVPVSLHDRLVLEPAEEEIVLESRPPATDRLEENLAYRAAALLREATGCSRGAVIRLQKTIPVAAGLAGGSTDAAGVLTGLNRLWGTGLSDGELADLAIRLGSDVPFFIWSRPARVEGIGERVTPLPVAGPLWMVVATPDVPKSTGQVYRWFDELADVGPRPDAGAMEAALARGDAAAVGRALCNVFEQVMLPRHPEIARLKEAMLAAGALGAVMSGAGPSVLGVVPDREAGGRLLERIRPLSRDAWVVRTLV</sequence>
<dbReference type="EC" id="2.7.1.148" evidence="1"/>
<dbReference type="EMBL" id="AP006840">
    <property type="protein sequence ID" value="BAD42228.1"/>
    <property type="molecule type" value="Genomic_DNA"/>
</dbReference>
<dbReference type="RefSeq" id="WP_011197359.1">
    <property type="nucleotide sequence ID" value="NC_006177.1"/>
</dbReference>
<dbReference type="SMR" id="Q67JC2"/>
<dbReference type="STRING" id="292459.STH3246"/>
<dbReference type="KEGG" id="sth:STH3246"/>
<dbReference type="eggNOG" id="COG1947">
    <property type="taxonomic scope" value="Bacteria"/>
</dbReference>
<dbReference type="HOGENOM" id="CLU_053057_1_1_9"/>
<dbReference type="OrthoDB" id="9809438at2"/>
<dbReference type="UniPathway" id="UPA00056">
    <property type="reaction ID" value="UER00094"/>
</dbReference>
<dbReference type="Proteomes" id="UP000000417">
    <property type="component" value="Chromosome"/>
</dbReference>
<dbReference type="GO" id="GO:0050515">
    <property type="term" value="F:4-(cytidine 5'-diphospho)-2-C-methyl-D-erythritol kinase activity"/>
    <property type="evidence" value="ECO:0007669"/>
    <property type="project" value="UniProtKB-UniRule"/>
</dbReference>
<dbReference type="GO" id="GO:0005524">
    <property type="term" value="F:ATP binding"/>
    <property type="evidence" value="ECO:0007669"/>
    <property type="project" value="UniProtKB-UniRule"/>
</dbReference>
<dbReference type="GO" id="GO:0019288">
    <property type="term" value="P:isopentenyl diphosphate biosynthetic process, methylerythritol 4-phosphate pathway"/>
    <property type="evidence" value="ECO:0007669"/>
    <property type="project" value="UniProtKB-UniRule"/>
</dbReference>
<dbReference type="GO" id="GO:0016114">
    <property type="term" value="P:terpenoid biosynthetic process"/>
    <property type="evidence" value="ECO:0007669"/>
    <property type="project" value="InterPro"/>
</dbReference>
<dbReference type="Gene3D" id="3.30.230.10">
    <property type="match status" value="1"/>
</dbReference>
<dbReference type="Gene3D" id="3.30.70.890">
    <property type="entry name" value="GHMP kinase, C-terminal domain"/>
    <property type="match status" value="1"/>
</dbReference>
<dbReference type="HAMAP" id="MF_00061">
    <property type="entry name" value="IspE"/>
    <property type="match status" value="1"/>
</dbReference>
<dbReference type="InterPro" id="IPR013750">
    <property type="entry name" value="GHMP_kinase_C_dom"/>
</dbReference>
<dbReference type="InterPro" id="IPR036554">
    <property type="entry name" value="GHMP_kinase_C_sf"/>
</dbReference>
<dbReference type="InterPro" id="IPR006204">
    <property type="entry name" value="GHMP_kinase_N_dom"/>
</dbReference>
<dbReference type="InterPro" id="IPR004424">
    <property type="entry name" value="IspE"/>
</dbReference>
<dbReference type="InterPro" id="IPR020568">
    <property type="entry name" value="Ribosomal_Su5_D2-typ_SF"/>
</dbReference>
<dbReference type="InterPro" id="IPR014721">
    <property type="entry name" value="Ribsml_uS5_D2-typ_fold_subgr"/>
</dbReference>
<dbReference type="NCBIfam" id="TIGR00154">
    <property type="entry name" value="ispE"/>
    <property type="match status" value="1"/>
</dbReference>
<dbReference type="PANTHER" id="PTHR43527">
    <property type="entry name" value="4-DIPHOSPHOCYTIDYL-2-C-METHYL-D-ERYTHRITOL KINASE, CHLOROPLASTIC"/>
    <property type="match status" value="1"/>
</dbReference>
<dbReference type="PANTHER" id="PTHR43527:SF2">
    <property type="entry name" value="4-DIPHOSPHOCYTIDYL-2-C-METHYL-D-ERYTHRITOL KINASE, CHLOROPLASTIC"/>
    <property type="match status" value="1"/>
</dbReference>
<dbReference type="Pfam" id="PF08544">
    <property type="entry name" value="GHMP_kinases_C"/>
    <property type="match status" value="1"/>
</dbReference>
<dbReference type="Pfam" id="PF00288">
    <property type="entry name" value="GHMP_kinases_N"/>
    <property type="match status" value="1"/>
</dbReference>
<dbReference type="PIRSF" id="PIRSF010376">
    <property type="entry name" value="IspE"/>
    <property type="match status" value="1"/>
</dbReference>
<dbReference type="SUPFAM" id="SSF55060">
    <property type="entry name" value="GHMP Kinase, C-terminal domain"/>
    <property type="match status" value="1"/>
</dbReference>
<dbReference type="SUPFAM" id="SSF54211">
    <property type="entry name" value="Ribosomal protein S5 domain 2-like"/>
    <property type="match status" value="1"/>
</dbReference>
<reference key="1">
    <citation type="journal article" date="2004" name="Nucleic Acids Res.">
        <title>Genome sequence of Symbiobacterium thermophilum, an uncultivable bacterium that depends on microbial commensalism.</title>
        <authorList>
            <person name="Ueda K."/>
            <person name="Yamashita A."/>
            <person name="Ishikawa J."/>
            <person name="Shimada M."/>
            <person name="Watsuji T."/>
            <person name="Morimura K."/>
            <person name="Ikeda H."/>
            <person name="Hattori M."/>
            <person name="Beppu T."/>
        </authorList>
    </citation>
    <scope>NUCLEOTIDE SEQUENCE [LARGE SCALE GENOMIC DNA]</scope>
    <source>
        <strain>DSM 24528 / JCM 14929 / IAM 14863 / T</strain>
    </source>
</reference>
<keyword id="KW-0067">ATP-binding</keyword>
<keyword id="KW-0414">Isoprene biosynthesis</keyword>
<keyword id="KW-0418">Kinase</keyword>
<keyword id="KW-0547">Nucleotide-binding</keyword>
<keyword id="KW-1185">Reference proteome</keyword>
<keyword id="KW-0808">Transferase</keyword>
<proteinExistence type="inferred from homology"/>
<name>ISPE_SYMTH</name>
<comment type="function">
    <text evidence="1">Catalyzes the phosphorylation of the position 2 hydroxy group of 4-diphosphocytidyl-2C-methyl-D-erythritol.</text>
</comment>
<comment type="catalytic activity">
    <reaction evidence="1">
        <text>4-CDP-2-C-methyl-D-erythritol + ATP = 4-CDP-2-C-methyl-D-erythritol 2-phosphate + ADP + H(+)</text>
        <dbReference type="Rhea" id="RHEA:18437"/>
        <dbReference type="ChEBI" id="CHEBI:15378"/>
        <dbReference type="ChEBI" id="CHEBI:30616"/>
        <dbReference type="ChEBI" id="CHEBI:57823"/>
        <dbReference type="ChEBI" id="CHEBI:57919"/>
        <dbReference type="ChEBI" id="CHEBI:456216"/>
        <dbReference type="EC" id="2.7.1.148"/>
    </reaction>
</comment>
<comment type="pathway">
    <text evidence="1">Isoprenoid biosynthesis; isopentenyl diphosphate biosynthesis via DXP pathway; isopentenyl diphosphate from 1-deoxy-D-xylulose 5-phosphate: step 3/6.</text>
</comment>
<comment type="similarity">
    <text evidence="1">Belongs to the GHMP kinase family. IspE subfamily.</text>
</comment>
<organism>
    <name type="scientific">Symbiobacterium thermophilum (strain DSM 24528 / JCM 14929 / IAM 14863 / T)</name>
    <dbReference type="NCBI Taxonomy" id="292459"/>
    <lineage>
        <taxon>Bacteria</taxon>
        <taxon>Bacillati</taxon>
        <taxon>Bacillota</taxon>
        <taxon>Clostridia</taxon>
        <taxon>Eubacteriales</taxon>
        <taxon>Symbiobacteriaceae</taxon>
        <taxon>Symbiobacterium</taxon>
    </lineage>
</organism>
<gene>
    <name evidence="1" type="primary">ispE</name>
    <name type="ordered locus">STH3246</name>
</gene>
<evidence type="ECO:0000255" key="1">
    <source>
        <dbReference type="HAMAP-Rule" id="MF_00061"/>
    </source>
</evidence>
<accession>Q67JC2</accession>